<protein>
    <recommendedName>
        <fullName evidence="1">Peptidase T</fullName>
        <ecNumber evidence="1">3.4.11.4</ecNumber>
    </recommendedName>
    <alternativeName>
        <fullName evidence="1">Aminotripeptidase</fullName>
        <shortName evidence="1">Tripeptidase</shortName>
    </alternativeName>
    <alternativeName>
        <fullName evidence="1">Tripeptide aminopeptidase</fullName>
    </alternativeName>
</protein>
<evidence type="ECO:0000255" key="1">
    <source>
        <dbReference type="HAMAP-Rule" id="MF_00550"/>
    </source>
</evidence>
<reference key="1">
    <citation type="submission" date="2007-10" db="EMBL/GenBank/DDBJ databases">
        <title>Complete sequence of Shewanella pealeana ATCC 700345.</title>
        <authorList>
            <consortium name="US DOE Joint Genome Institute"/>
            <person name="Copeland A."/>
            <person name="Lucas S."/>
            <person name="Lapidus A."/>
            <person name="Barry K."/>
            <person name="Glavina del Rio T."/>
            <person name="Dalin E."/>
            <person name="Tice H."/>
            <person name="Pitluck S."/>
            <person name="Chertkov O."/>
            <person name="Brettin T."/>
            <person name="Bruce D."/>
            <person name="Detter J.C."/>
            <person name="Han C."/>
            <person name="Schmutz J."/>
            <person name="Larimer F."/>
            <person name="Land M."/>
            <person name="Hauser L."/>
            <person name="Kyrpides N."/>
            <person name="Kim E."/>
            <person name="Zhao J.-S.Z."/>
            <person name="Manno D."/>
            <person name="Hawari J."/>
            <person name="Richardson P."/>
        </authorList>
    </citation>
    <scope>NUCLEOTIDE SEQUENCE [LARGE SCALE GENOMIC DNA]</scope>
    <source>
        <strain>ATCC 700345 / ANG-SQ1</strain>
    </source>
</reference>
<name>PEPT_SHEPA</name>
<keyword id="KW-0031">Aminopeptidase</keyword>
<keyword id="KW-0963">Cytoplasm</keyword>
<keyword id="KW-0378">Hydrolase</keyword>
<keyword id="KW-0479">Metal-binding</keyword>
<keyword id="KW-0482">Metalloprotease</keyword>
<keyword id="KW-0645">Protease</keyword>
<keyword id="KW-1185">Reference proteome</keyword>
<keyword id="KW-0862">Zinc</keyword>
<dbReference type="EC" id="3.4.11.4" evidence="1"/>
<dbReference type="EMBL" id="CP000851">
    <property type="protein sequence ID" value="ABV88260.1"/>
    <property type="molecule type" value="Genomic_DNA"/>
</dbReference>
<dbReference type="RefSeq" id="WP_012156164.1">
    <property type="nucleotide sequence ID" value="NC_009901.1"/>
</dbReference>
<dbReference type="SMR" id="A8H6S3"/>
<dbReference type="STRING" id="398579.Spea_2943"/>
<dbReference type="MEROPS" id="M20.003"/>
<dbReference type="KEGG" id="spl:Spea_2943"/>
<dbReference type="eggNOG" id="COG2195">
    <property type="taxonomic scope" value="Bacteria"/>
</dbReference>
<dbReference type="HOGENOM" id="CLU_053676_0_0_6"/>
<dbReference type="OrthoDB" id="9804934at2"/>
<dbReference type="Proteomes" id="UP000002608">
    <property type="component" value="Chromosome"/>
</dbReference>
<dbReference type="GO" id="GO:0005829">
    <property type="term" value="C:cytosol"/>
    <property type="evidence" value="ECO:0007669"/>
    <property type="project" value="TreeGrafter"/>
</dbReference>
<dbReference type="GO" id="GO:0008237">
    <property type="term" value="F:metallopeptidase activity"/>
    <property type="evidence" value="ECO:0007669"/>
    <property type="project" value="UniProtKB-KW"/>
</dbReference>
<dbReference type="GO" id="GO:0045148">
    <property type="term" value="F:tripeptide aminopeptidase activity"/>
    <property type="evidence" value="ECO:0007669"/>
    <property type="project" value="UniProtKB-UniRule"/>
</dbReference>
<dbReference type="GO" id="GO:0008270">
    <property type="term" value="F:zinc ion binding"/>
    <property type="evidence" value="ECO:0007669"/>
    <property type="project" value="UniProtKB-UniRule"/>
</dbReference>
<dbReference type="GO" id="GO:0043171">
    <property type="term" value="P:peptide catabolic process"/>
    <property type="evidence" value="ECO:0007669"/>
    <property type="project" value="UniProtKB-UniRule"/>
</dbReference>
<dbReference type="GO" id="GO:0006508">
    <property type="term" value="P:proteolysis"/>
    <property type="evidence" value="ECO:0007669"/>
    <property type="project" value="UniProtKB-UniRule"/>
</dbReference>
<dbReference type="CDD" id="cd03892">
    <property type="entry name" value="M20_peptT"/>
    <property type="match status" value="1"/>
</dbReference>
<dbReference type="Gene3D" id="3.30.70.360">
    <property type="match status" value="1"/>
</dbReference>
<dbReference type="Gene3D" id="3.40.630.10">
    <property type="entry name" value="Zn peptidases"/>
    <property type="match status" value="1"/>
</dbReference>
<dbReference type="HAMAP" id="MF_00550">
    <property type="entry name" value="Aminopeptidase_M20"/>
    <property type="match status" value="1"/>
</dbReference>
<dbReference type="InterPro" id="IPR001261">
    <property type="entry name" value="ArgE/DapE_CS"/>
</dbReference>
<dbReference type="InterPro" id="IPR036264">
    <property type="entry name" value="Bact_exopeptidase_dim_dom"/>
</dbReference>
<dbReference type="InterPro" id="IPR002933">
    <property type="entry name" value="Peptidase_M20"/>
</dbReference>
<dbReference type="InterPro" id="IPR011650">
    <property type="entry name" value="Peptidase_M20_dimer"/>
</dbReference>
<dbReference type="InterPro" id="IPR010161">
    <property type="entry name" value="Peptidase_M20B"/>
</dbReference>
<dbReference type="NCBIfam" id="TIGR01882">
    <property type="entry name" value="peptidase-T"/>
    <property type="match status" value="1"/>
</dbReference>
<dbReference type="NCBIfam" id="NF003976">
    <property type="entry name" value="PRK05469.1"/>
    <property type="match status" value="1"/>
</dbReference>
<dbReference type="NCBIfam" id="NF009920">
    <property type="entry name" value="PRK13381.1"/>
    <property type="match status" value="1"/>
</dbReference>
<dbReference type="PANTHER" id="PTHR42994">
    <property type="entry name" value="PEPTIDASE T"/>
    <property type="match status" value="1"/>
</dbReference>
<dbReference type="PANTHER" id="PTHR42994:SF1">
    <property type="entry name" value="PEPTIDASE T"/>
    <property type="match status" value="1"/>
</dbReference>
<dbReference type="Pfam" id="PF07687">
    <property type="entry name" value="M20_dimer"/>
    <property type="match status" value="1"/>
</dbReference>
<dbReference type="Pfam" id="PF01546">
    <property type="entry name" value="Peptidase_M20"/>
    <property type="match status" value="1"/>
</dbReference>
<dbReference type="PIRSF" id="PIRSF037215">
    <property type="entry name" value="Peptidase_M20B"/>
    <property type="match status" value="1"/>
</dbReference>
<dbReference type="SUPFAM" id="SSF55031">
    <property type="entry name" value="Bacterial exopeptidase dimerisation domain"/>
    <property type="match status" value="1"/>
</dbReference>
<dbReference type="SUPFAM" id="SSF53187">
    <property type="entry name" value="Zn-dependent exopeptidases"/>
    <property type="match status" value="1"/>
</dbReference>
<dbReference type="PROSITE" id="PS00758">
    <property type="entry name" value="ARGE_DAPE_CPG2_1"/>
    <property type="match status" value="1"/>
</dbReference>
<feature type="chain" id="PRO_1000200894" description="Peptidase T">
    <location>
        <begin position="1"/>
        <end position="407"/>
    </location>
</feature>
<feature type="active site" evidence="1">
    <location>
        <position position="80"/>
    </location>
</feature>
<feature type="active site" description="Proton acceptor" evidence="1">
    <location>
        <position position="173"/>
    </location>
</feature>
<feature type="binding site" evidence="1">
    <location>
        <position position="78"/>
    </location>
    <ligand>
        <name>Zn(2+)</name>
        <dbReference type="ChEBI" id="CHEBI:29105"/>
        <label>1</label>
    </ligand>
</feature>
<feature type="binding site" evidence="1">
    <location>
        <position position="139"/>
    </location>
    <ligand>
        <name>Zn(2+)</name>
        <dbReference type="ChEBI" id="CHEBI:29105"/>
        <label>1</label>
    </ligand>
</feature>
<feature type="binding site" evidence="1">
    <location>
        <position position="139"/>
    </location>
    <ligand>
        <name>Zn(2+)</name>
        <dbReference type="ChEBI" id="CHEBI:29105"/>
        <label>2</label>
    </ligand>
</feature>
<feature type="binding site" evidence="1">
    <location>
        <position position="174"/>
    </location>
    <ligand>
        <name>Zn(2+)</name>
        <dbReference type="ChEBI" id="CHEBI:29105"/>
        <label>2</label>
    </ligand>
</feature>
<feature type="binding site" evidence="1">
    <location>
        <position position="196"/>
    </location>
    <ligand>
        <name>Zn(2+)</name>
        <dbReference type="ChEBI" id="CHEBI:29105"/>
        <label>1</label>
    </ligand>
</feature>
<feature type="binding site" evidence="1">
    <location>
        <position position="378"/>
    </location>
    <ligand>
        <name>Zn(2+)</name>
        <dbReference type="ChEBI" id="CHEBI:29105"/>
        <label>2</label>
    </ligand>
</feature>
<accession>A8H6S3</accession>
<gene>
    <name evidence="1" type="primary">pepT</name>
    <name type="ordered locus">Spea_2943</name>
</gene>
<organism>
    <name type="scientific">Shewanella pealeana (strain ATCC 700345 / ANG-SQ1)</name>
    <dbReference type="NCBI Taxonomy" id="398579"/>
    <lineage>
        <taxon>Bacteria</taxon>
        <taxon>Pseudomonadati</taxon>
        <taxon>Pseudomonadota</taxon>
        <taxon>Gammaproteobacteria</taxon>
        <taxon>Alteromonadales</taxon>
        <taxon>Shewanellaceae</taxon>
        <taxon>Shewanella</taxon>
    </lineage>
</organism>
<sequence length="407" mass="45034">MKQQLLERFLSYVSFDTQSDGQNQNVPSTHSQFVFAQHLRQELVSLAFEDVQLSDKGYLTATVPANVEGVPSIGFIAHLDTAPDYSGKNVSPQVIENYNGEDIQLGLAEVLSPKQFSSLNQYIGQTLITTDGTSLLGGDDKAGIAEIISALHHLLTHPEIPHGKIRLCFTPDEEIGRGADHFDVESFGAQWAYTIDGGQVGELEYENFNAATAMITATGNNCHPGTAYGVMVNAQTIAARFHAKMPLKDTPEHSRDYDGFFHLLGMEGVTEKATLTYIIRDFDLELFEKRKQWLTELVEKYNADLSIGQLTIDVQDSYLNMKQQVLPHPHIIDIAKQAMQNLGIEPIIKPIRGGTDGSRLSYMGLPCPNLFTGGHNFHGKHEYVCVESMVKATETIIEIAKLTAEHK</sequence>
<proteinExistence type="inferred from homology"/>
<comment type="function">
    <text evidence="1">Cleaves the N-terminal amino acid of tripeptides.</text>
</comment>
<comment type="catalytic activity">
    <reaction evidence="1">
        <text>Release of the N-terminal residue from a tripeptide.</text>
        <dbReference type="EC" id="3.4.11.4"/>
    </reaction>
</comment>
<comment type="cofactor">
    <cofactor evidence="1">
        <name>Zn(2+)</name>
        <dbReference type="ChEBI" id="CHEBI:29105"/>
    </cofactor>
    <text evidence="1">Binds 2 Zn(2+) ions per subunit.</text>
</comment>
<comment type="subcellular location">
    <subcellularLocation>
        <location evidence="1">Cytoplasm</location>
    </subcellularLocation>
</comment>
<comment type="similarity">
    <text evidence="1">Belongs to the peptidase M20B family.</text>
</comment>